<reference key="1">
    <citation type="journal article" date="2007" name="PLoS ONE">
        <title>Analysis of the neurotoxin complex genes in Clostridium botulinum A1-A4 and B1 strains: BoNT/A3, /Ba4 and /B1 clusters are located within plasmids.</title>
        <authorList>
            <person name="Smith T.J."/>
            <person name="Hill K.K."/>
            <person name="Foley B.T."/>
            <person name="Detter J.C."/>
            <person name="Munk A.C."/>
            <person name="Bruce D.C."/>
            <person name="Doggett N.A."/>
            <person name="Smith L.A."/>
            <person name="Marks J.D."/>
            <person name="Xie G."/>
            <person name="Brettin T.S."/>
        </authorList>
    </citation>
    <scope>NUCLEOTIDE SEQUENCE [LARGE SCALE GENOMIC DNA]</scope>
    <source>
        <strain>Okra / Type B1</strain>
    </source>
</reference>
<dbReference type="EC" id="4.1.2.4" evidence="1"/>
<dbReference type="EMBL" id="CP000939">
    <property type="protein sequence ID" value="ACA45338.1"/>
    <property type="molecule type" value="Genomic_DNA"/>
</dbReference>
<dbReference type="RefSeq" id="WP_004451714.1">
    <property type="nucleotide sequence ID" value="NC_010516.1"/>
</dbReference>
<dbReference type="SMR" id="B1ILA1"/>
<dbReference type="KEGG" id="cbb:CLD_2989"/>
<dbReference type="HOGENOM" id="CLU_053595_0_1_9"/>
<dbReference type="UniPathway" id="UPA00002">
    <property type="reaction ID" value="UER00468"/>
</dbReference>
<dbReference type="Proteomes" id="UP000008541">
    <property type="component" value="Chromosome"/>
</dbReference>
<dbReference type="GO" id="GO:0005737">
    <property type="term" value="C:cytoplasm"/>
    <property type="evidence" value="ECO:0007669"/>
    <property type="project" value="UniProtKB-SubCell"/>
</dbReference>
<dbReference type="GO" id="GO:0004139">
    <property type="term" value="F:deoxyribose-phosphate aldolase activity"/>
    <property type="evidence" value="ECO:0007669"/>
    <property type="project" value="UniProtKB-UniRule"/>
</dbReference>
<dbReference type="GO" id="GO:0006018">
    <property type="term" value="P:2-deoxyribose 1-phosphate catabolic process"/>
    <property type="evidence" value="ECO:0007669"/>
    <property type="project" value="UniProtKB-UniRule"/>
</dbReference>
<dbReference type="GO" id="GO:0016052">
    <property type="term" value="P:carbohydrate catabolic process"/>
    <property type="evidence" value="ECO:0007669"/>
    <property type="project" value="TreeGrafter"/>
</dbReference>
<dbReference type="GO" id="GO:0009264">
    <property type="term" value="P:deoxyribonucleotide catabolic process"/>
    <property type="evidence" value="ECO:0007669"/>
    <property type="project" value="InterPro"/>
</dbReference>
<dbReference type="CDD" id="cd00959">
    <property type="entry name" value="DeoC"/>
    <property type="match status" value="1"/>
</dbReference>
<dbReference type="FunFam" id="3.20.20.70:FF:000044">
    <property type="entry name" value="Deoxyribose-phosphate aldolase"/>
    <property type="match status" value="1"/>
</dbReference>
<dbReference type="Gene3D" id="3.20.20.70">
    <property type="entry name" value="Aldolase class I"/>
    <property type="match status" value="1"/>
</dbReference>
<dbReference type="HAMAP" id="MF_00114">
    <property type="entry name" value="DeoC_type1"/>
    <property type="match status" value="1"/>
</dbReference>
<dbReference type="InterPro" id="IPR013785">
    <property type="entry name" value="Aldolase_TIM"/>
</dbReference>
<dbReference type="InterPro" id="IPR011343">
    <property type="entry name" value="DeoC"/>
</dbReference>
<dbReference type="InterPro" id="IPR002915">
    <property type="entry name" value="DeoC/FbaB/LacD_aldolase"/>
</dbReference>
<dbReference type="InterPro" id="IPR028581">
    <property type="entry name" value="DeoC_typeI"/>
</dbReference>
<dbReference type="NCBIfam" id="TIGR00126">
    <property type="entry name" value="deoC"/>
    <property type="match status" value="1"/>
</dbReference>
<dbReference type="PANTHER" id="PTHR10889">
    <property type="entry name" value="DEOXYRIBOSE-PHOSPHATE ALDOLASE"/>
    <property type="match status" value="1"/>
</dbReference>
<dbReference type="PANTHER" id="PTHR10889:SF1">
    <property type="entry name" value="DEOXYRIBOSE-PHOSPHATE ALDOLASE"/>
    <property type="match status" value="1"/>
</dbReference>
<dbReference type="Pfam" id="PF01791">
    <property type="entry name" value="DeoC"/>
    <property type="match status" value="1"/>
</dbReference>
<dbReference type="PIRSF" id="PIRSF001357">
    <property type="entry name" value="DeoC"/>
    <property type="match status" value="1"/>
</dbReference>
<dbReference type="SMART" id="SM01133">
    <property type="entry name" value="DeoC"/>
    <property type="match status" value="1"/>
</dbReference>
<dbReference type="SUPFAM" id="SSF51569">
    <property type="entry name" value="Aldolase"/>
    <property type="match status" value="1"/>
</dbReference>
<keyword id="KW-0963">Cytoplasm</keyword>
<keyword id="KW-0456">Lyase</keyword>
<keyword id="KW-0704">Schiff base</keyword>
<organism>
    <name type="scientific">Clostridium botulinum (strain Okra / Type B1)</name>
    <dbReference type="NCBI Taxonomy" id="498213"/>
    <lineage>
        <taxon>Bacteria</taxon>
        <taxon>Bacillati</taxon>
        <taxon>Bacillota</taxon>
        <taxon>Clostridia</taxon>
        <taxon>Eubacteriales</taxon>
        <taxon>Clostridiaceae</taxon>
        <taxon>Clostridium</taxon>
    </lineage>
</organism>
<comment type="function">
    <text evidence="1">Catalyzes a reversible aldol reaction between acetaldehyde and D-glyceraldehyde 3-phosphate to generate 2-deoxy-D-ribose 5-phosphate.</text>
</comment>
<comment type="catalytic activity">
    <reaction evidence="1">
        <text>2-deoxy-D-ribose 5-phosphate = D-glyceraldehyde 3-phosphate + acetaldehyde</text>
        <dbReference type="Rhea" id="RHEA:12821"/>
        <dbReference type="ChEBI" id="CHEBI:15343"/>
        <dbReference type="ChEBI" id="CHEBI:59776"/>
        <dbReference type="ChEBI" id="CHEBI:62877"/>
        <dbReference type="EC" id="4.1.2.4"/>
    </reaction>
</comment>
<comment type="pathway">
    <text evidence="1">Carbohydrate degradation; 2-deoxy-D-ribose 1-phosphate degradation; D-glyceraldehyde 3-phosphate and acetaldehyde from 2-deoxy-alpha-D-ribose 1-phosphate: step 2/2.</text>
</comment>
<comment type="subcellular location">
    <subcellularLocation>
        <location evidence="1">Cytoplasm</location>
    </subcellularLocation>
</comment>
<comment type="similarity">
    <text evidence="1">Belongs to the DeoC/FbaB aldolase family. DeoC type 1 subfamily.</text>
</comment>
<evidence type="ECO:0000255" key="1">
    <source>
        <dbReference type="HAMAP-Rule" id="MF_00114"/>
    </source>
</evidence>
<accession>B1ILA1</accession>
<sequence length="212" mass="23122">MKLSKYIDHTLLKPQATEKDILKLIEEAKTYDFASVCVNPSWVKLAYENLKDTDVKVCTVVGFPLGATSTASKVYETKVAIEDGADEIDMVISVGQLKSGNDEYVKEEIKKIVEASKNRLVKVIIETCLLTEEEKVKACTFSKEAGADYVKTSTGFSTGGAKPEDIKLMRETVGKNMGVKASGGIHTREEMEVMIENGATRIGASCGVELVK</sequence>
<proteinExistence type="inferred from homology"/>
<feature type="chain" id="PRO_1000094841" description="Deoxyribose-phosphate aldolase">
    <location>
        <begin position="1"/>
        <end position="212"/>
    </location>
</feature>
<feature type="active site" description="Proton donor/acceptor" evidence="1">
    <location>
        <position position="89"/>
    </location>
</feature>
<feature type="active site" description="Schiff-base intermediate with acetaldehyde" evidence="1">
    <location>
        <position position="151"/>
    </location>
</feature>
<feature type="active site" description="Proton donor/acceptor" evidence="1">
    <location>
        <position position="180"/>
    </location>
</feature>
<protein>
    <recommendedName>
        <fullName evidence="1">Deoxyribose-phosphate aldolase</fullName>
        <shortName evidence="1">DERA</shortName>
        <ecNumber evidence="1">4.1.2.4</ecNumber>
    </recommendedName>
    <alternativeName>
        <fullName evidence="1">2-deoxy-D-ribose 5-phosphate aldolase</fullName>
    </alternativeName>
    <alternativeName>
        <fullName evidence="1">Phosphodeoxyriboaldolase</fullName>
        <shortName evidence="1">Deoxyriboaldolase</shortName>
    </alternativeName>
</protein>
<gene>
    <name evidence="1" type="primary">deoC</name>
    <name type="ordered locus">CLD_2989</name>
</gene>
<name>DEOC_CLOBK</name>